<keyword id="KW-0002">3D-structure</keyword>
<keyword id="KW-1185">Reference proteome</keyword>
<comment type="interaction">
    <interactant intactId="EBI-322121">
        <id>Q22836</id>
    </interactant>
    <interactant intactId="EBI-2414398">
        <id>Q18445</id>
        <label>cyn-12</label>
    </interactant>
    <organismsDiffer>false</organismsDiffer>
    <experiments>4</experiments>
</comment>
<comment type="similarity">
    <text evidence="2">Belongs to the SNW family.</text>
</comment>
<feature type="chain" id="PRO_0000084829" description="Uncharacterized protein T27F2.1">
    <location>
        <begin position="1"/>
        <end position="535"/>
    </location>
</feature>
<feature type="region of interest" description="Disordered" evidence="1">
    <location>
        <begin position="1"/>
        <end position="58"/>
    </location>
</feature>
<feature type="region of interest" description="SNW">
    <location>
        <begin position="179"/>
        <end position="342"/>
    </location>
</feature>
<feature type="region of interest" description="Disordered" evidence="1">
    <location>
        <begin position="211"/>
        <end position="254"/>
    </location>
</feature>
<feature type="region of interest" description="Disordered" evidence="1">
    <location>
        <begin position="313"/>
        <end position="353"/>
    </location>
</feature>
<feature type="region of interest" description="Disordered" evidence="1">
    <location>
        <begin position="376"/>
        <end position="416"/>
    </location>
</feature>
<feature type="region of interest" description="Disordered" evidence="1">
    <location>
        <begin position="421"/>
        <end position="440"/>
    </location>
</feature>
<feature type="region of interest" description="Disordered" evidence="1">
    <location>
        <begin position="508"/>
        <end position="535"/>
    </location>
</feature>
<feature type="compositionally biased region" description="Basic and acidic residues" evidence="1">
    <location>
        <begin position="22"/>
        <end position="34"/>
    </location>
</feature>
<feature type="compositionally biased region" description="Basic and acidic residues" evidence="1">
    <location>
        <begin position="376"/>
        <end position="393"/>
    </location>
</feature>
<feature type="compositionally biased region" description="Basic and acidic residues" evidence="1">
    <location>
        <begin position="511"/>
        <end position="535"/>
    </location>
</feature>
<proteinExistence type="evidence at protein level"/>
<name>YGH1_CAEEL</name>
<accession>Q22836</accession>
<reference key="1">
    <citation type="journal article" date="1998" name="Science">
        <title>Genome sequence of the nematode C. elegans: a platform for investigating biology.</title>
        <authorList>
            <consortium name="The C. elegans sequencing consortium"/>
        </authorList>
    </citation>
    <scope>NUCLEOTIDE SEQUENCE [LARGE SCALE GENOMIC DNA]</scope>
    <source>
        <strain>Bristol N2</strain>
    </source>
</reference>
<sequence length="535" mass="60197">MSMKLRDILPAPVAADEAASQIRRDPWFGGRDNEPSAALVSKEPPPYGKRTSFRPRGPEDFGDGGAFPEIHVAQFPLGLGLGDMRGKPENTLALQYGTDGKLQHDAIARIGHVKDKVVYSKLNDMKAKTWNEDDDDIQKPDDDAVIDATEKTRMALEKIVNSKVASALPVRHADKLAPAQYIRYTPSQQNGAAGSQQRIIRMVEEQKDPMEPPKFKINQKIPRAPPSPPAPVMHSPPRKMTAKDQNDWKIPPCISNWKNPKGFTVGLDKRLAADGRGLQQTHINENFAKLADALYIADRKAREEVETRAQLERRVAQNKKSEQEAKMAEAAAKARQERSAMRRKDDEDDEQVKVREEIRRDRLDDIRKERNIARSRPDKADKLRKERERDISEKIVLGLPDTNQKRTGEPQFDQRLFDKTQGLDSGAMDDDTYNPYDAAWRGGDSVQQHVYRPSKNLDNDVYGGDLDKIIEQKNRFVADKGFSGAEGSSRGSGPVQFEKDQDVFGLSSLFEHTKEKKRGGDGGDSRGESKRSRRD</sequence>
<dbReference type="EMBL" id="Z74045">
    <property type="protein sequence ID" value="CAA98552.1"/>
    <property type="molecule type" value="Genomic_DNA"/>
</dbReference>
<dbReference type="PIR" id="T25379">
    <property type="entry name" value="T25379"/>
</dbReference>
<dbReference type="PDB" id="8RO0">
    <property type="method" value="EM"/>
    <property type="resolution" value="2.90 A"/>
    <property type="chains" value="R=1-535"/>
</dbReference>
<dbReference type="PDB" id="8RO1">
    <property type="method" value="EM"/>
    <property type="resolution" value="3.00 A"/>
    <property type="chains" value="R=1-535"/>
</dbReference>
<dbReference type="PDBsum" id="8RO0"/>
<dbReference type="PDBsum" id="8RO1"/>
<dbReference type="EMDB" id="EMD-19397"/>
<dbReference type="EMDB" id="EMD-19398"/>
<dbReference type="SMR" id="Q22836"/>
<dbReference type="BioGRID" id="44623">
    <property type="interactions" value="36"/>
</dbReference>
<dbReference type="DIP" id="DIP-26404N"/>
<dbReference type="FunCoup" id="Q22836">
    <property type="interactions" value="2787"/>
</dbReference>
<dbReference type="IntAct" id="Q22836">
    <property type="interactions" value="6"/>
</dbReference>
<dbReference type="STRING" id="6239.T27F2.1.1"/>
<dbReference type="iPTMnet" id="Q22836"/>
<dbReference type="PaxDb" id="6239-T27F2.1"/>
<dbReference type="PeptideAtlas" id="Q22836"/>
<dbReference type="EnsemblMetazoa" id="T27F2.1.1">
    <property type="protein sequence ID" value="T27F2.1.1"/>
    <property type="gene ID" value="WBGene00004806"/>
</dbReference>
<dbReference type="KEGG" id="cel:CELE_T27F2.1"/>
<dbReference type="AGR" id="WB:WBGene00004806"/>
<dbReference type="CTD" id="179598"/>
<dbReference type="WormBase" id="T27F2.1">
    <property type="protein sequence ID" value="CE06519"/>
    <property type="gene ID" value="WBGene00004806"/>
    <property type="gene designation" value="skp-1"/>
</dbReference>
<dbReference type="eggNOG" id="KOG2441">
    <property type="taxonomic scope" value="Eukaryota"/>
</dbReference>
<dbReference type="GeneTree" id="ENSGT00390000010423"/>
<dbReference type="HOGENOM" id="CLU_006601_2_0_1"/>
<dbReference type="InParanoid" id="Q22836"/>
<dbReference type="OMA" id="YGQRRGW"/>
<dbReference type="OrthoDB" id="666364at2759"/>
<dbReference type="PhylomeDB" id="Q22836"/>
<dbReference type="Reactome" id="R-CEL-2173795">
    <property type="pathway name" value="Downregulation of SMAD2/3:SMAD4 transcriptional activity"/>
</dbReference>
<dbReference type="Reactome" id="R-CEL-72163">
    <property type="pathway name" value="mRNA Splicing - Major Pathway"/>
</dbReference>
<dbReference type="PRO" id="PR:Q22836"/>
<dbReference type="Proteomes" id="UP000001940">
    <property type="component" value="Chromosome V"/>
</dbReference>
<dbReference type="Bgee" id="WBGene00004806">
    <property type="expression patterns" value="Expressed in germ line (C elegans) and 4 other cell types or tissues"/>
</dbReference>
<dbReference type="GO" id="GO:0005681">
    <property type="term" value="C:spliceosomal complex"/>
    <property type="evidence" value="ECO:0007669"/>
    <property type="project" value="InterPro"/>
</dbReference>
<dbReference type="GO" id="GO:0018991">
    <property type="term" value="P:egg-laying behavior"/>
    <property type="evidence" value="ECO:0000315"/>
    <property type="project" value="WormBase"/>
</dbReference>
<dbReference type="GO" id="GO:0009792">
    <property type="term" value="P:embryo development ending in birth or egg hatching"/>
    <property type="evidence" value="ECO:0000315"/>
    <property type="project" value="WormBase"/>
</dbReference>
<dbReference type="GO" id="GO:0007281">
    <property type="term" value="P:germ cell development"/>
    <property type="evidence" value="ECO:0000315"/>
    <property type="project" value="WormBase"/>
</dbReference>
<dbReference type="GO" id="GO:0040011">
    <property type="term" value="P:locomotion"/>
    <property type="evidence" value="ECO:0000315"/>
    <property type="project" value="WormBase"/>
</dbReference>
<dbReference type="GO" id="GO:0042303">
    <property type="term" value="P:molting cycle"/>
    <property type="evidence" value="ECO:0000315"/>
    <property type="project" value="WormBase"/>
</dbReference>
<dbReference type="GO" id="GO:0000398">
    <property type="term" value="P:mRNA splicing, via spliceosome"/>
    <property type="evidence" value="ECO:0007669"/>
    <property type="project" value="InterPro"/>
</dbReference>
<dbReference type="GO" id="GO:0002119">
    <property type="term" value="P:nematode larval development"/>
    <property type="evidence" value="ECO:0000315"/>
    <property type="project" value="WormBase"/>
</dbReference>
<dbReference type="GO" id="GO:0045893">
    <property type="term" value="P:positive regulation of DNA-templated transcription"/>
    <property type="evidence" value="ECO:0000250"/>
    <property type="project" value="WormBase"/>
</dbReference>
<dbReference type="GO" id="GO:0010468">
    <property type="term" value="P:regulation of gene expression"/>
    <property type="evidence" value="ECO:0000315"/>
    <property type="project" value="WormBase"/>
</dbReference>
<dbReference type="GO" id="GO:0060065">
    <property type="term" value="P:uterus development"/>
    <property type="evidence" value="ECO:0000315"/>
    <property type="project" value="WormBase"/>
</dbReference>
<dbReference type="GO" id="GO:0040025">
    <property type="term" value="P:vulval development"/>
    <property type="evidence" value="ECO:0000315"/>
    <property type="project" value="WormBase"/>
</dbReference>
<dbReference type="InterPro" id="IPR017862">
    <property type="entry name" value="SKI-int_prot_SKIP"/>
</dbReference>
<dbReference type="InterPro" id="IPR004015">
    <property type="entry name" value="SKI-int_prot_SKIP_SNW-dom"/>
</dbReference>
<dbReference type="PANTHER" id="PTHR12096">
    <property type="entry name" value="NUCLEAR PROTEIN SKIP-RELATED"/>
    <property type="match status" value="1"/>
</dbReference>
<dbReference type="Pfam" id="PF02731">
    <property type="entry name" value="SKIP_SNW"/>
    <property type="match status" value="1"/>
</dbReference>
<evidence type="ECO:0000256" key="1">
    <source>
        <dbReference type="SAM" id="MobiDB-lite"/>
    </source>
</evidence>
<evidence type="ECO:0000305" key="2"/>
<protein>
    <recommendedName>
        <fullName>Uncharacterized protein T27F2.1</fullName>
    </recommendedName>
</protein>
<gene>
    <name type="ORF">T27F2.1</name>
</gene>
<organism>
    <name type="scientific">Caenorhabditis elegans</name>
    <dbReference type="NCBI Taxonomy" id="6239"/>
    <lineage>
        <taxon>Eukaryota</taxon>
        <taxon>Metazoa</taxon>
        <taxon>Ecdysozoa</taxon>
        <taxon>Nematoda</taxon>
        <taxon>Chromadorea</taxon>
        <taxon>Rhabditida</taxon>
        <taxon>Rhabditina</taxon>
        <taxon>Rhabditomorpha</taxon>
        <taxon>Rhabditoidea</taxon>
        <taxon>Rhabditidae</taxon>
        <taxon>Peloderinae</taxon>
        <taxon>Caenorhabditis</taxon>
    </lineage>
</organism>